<proteinExistence type="evidence at protein level"/>
<comment type="function">
    <text>PsaA and PsaB bind P700, the primary electron donor of photosystem I (PSI), as well as the electron acceptors A0, A1 and FX. PSI is a plastocyanin/cytochrome c6-ferredoxin oxidoreductase, converting photonic excitation into a charge separation, which transfers an electron from the donor P700 chlorophyll pair to the spectroscopically characterized acceptors A0, A1, FX, FA and FB in turn. Oxidized P700 is reduced on the lumenal side of the thylakoid membrane by plastocyanin or cytochrome c6.</text>
</comment>
<comment type="catalytic activity">
    <reaction evidence="1">
        <text>reduced [plastocyanin] + hnu + oxidized [2Fe-2S]-[ferredoxin] = oxidized [plastocyanin] + reduced [2Fe-2S]-[ferredoxin]</text>
        <dbReference type="Rhea" id="RHEA:30407"/>
        <dbReference type="Rhea" id="RHEA-COMP:10000"/>
        <dbReference type="Rhea" id="RHEA-COMP:10001"/>
        <dbReference type="Rhea" id="RHEA-COMP:10039"/>
        <dbReference type="Rhea" id="RHEA-COMP:10040"/>
        <dbReference type="ChEBI" id="CHEBI:29036"/>
        <dbReference type="ChEBI" id="CHEBI:30212"/>
        <dbReference type="ChEBI" id="CHEBI:33737"/>
        <dbReference type="ChEBI" id="CHEBI:33738"/>
        <dbReference type="ChEBI" id="CHEBI:49552"/>
        <dbReference type="EC" id="1.97.1.12"/>
    </reaction>
</comment>
<comment type="cofactor">
    <text evidence="1">P700 is a chlorophyll a/chlorophyll a' dimer, A0 is one or more chlorophyll a, A1 is one or both phylloquinones and FX is a shared 4Fe-4S iron-sulfur center.</text>
</comment>
<comment type="subunit">
    <text evidence="1">The PsaA/B heterodimer binds the P700 chlorophyll special pair and subsequent electron acceptors. PSI consists of a core antenna complex that captures photons, and an electron transfer chain that converts photonic excitation into a charge separation. The eukaryotic PSI reaction center is composed of at least 11 subunits.</text>
</comment>
<comment type="subcellular location">
    <subcellularLocation>
        <location evidence="1">Plastid</location>
        <location evidence="1">Chloroplast thylakoid membrane</location>
        <topology evidence="1">Multi-pass membrane protein</topology>
    </subcellularLocation>
</comment>
<comment type="similarity">
    <text evidence="1">Belongs to the PsaA/PsaB family.</text>
</comment>
<protein>
    <recommendedName>
        <fullName evidence="1">Photosystem I P700 chlorophyll a apoprotein A1</fullName>
        <ecNumber evidence="1">1.97.1.12</ecNumber>
    </recommendedName>
    <alternativeName>
        <fullName evidence="1">PSI-A</fullName>
    </alternativeName>
    <alternativeName>
        <fullName evidence="1">PsaA</fullName>
    </alternativeName>
</protein>
<feature type="chain" id="PRO_0000275955" description="Photosystem I P700 chlorophyll a apoprotein A1">
    <location>
        <begin position="1"/>
        <end position="751"/>
    </location>
</feature>
<feature type="transmembrane region" description="Helical; Name=I" evidence="1">
    <location>
        <begin position="73"/>
        <end position="96"/>
    </location>
</feature>
<feature type="transmembrane region" description="Helical; Name=II" evidence="1">
    <location>
        <begin position="159"/>
        <end position="182"/>
    </location>
</feature>
<feature type="transmembrane region" description="Helical; Name=III" evidence="1">
    <location>
        <begin position="198"/>
        <end position="222"/>
    </location>
</feature>
<feature type="transmembrane region" description="Helical; Name=IV" evidence="1">
    <location>
        <begin position="294"/>
        <end position="312"/>
    </location>
</feature>
<feature type="transmembrane region" description="Helical; Name=V" evidence="1">
    <location>
        <begin position="349"/>
        <end position="372"/>
    </location>
</feature>
<feature type="transmembrane region" description="Helical; Name=VI" evidence="1">
    <location>
        <begin position="388"/>
        <end position="414"/>
    </location>
</feature>
<feature type="transmembrane region" description="Helical; Name=VII" evidence="1">
    <location>
        <begin position="436"/>
        <end position="458"/>
    </location>
</feature>
<feature type="transmembrane region" description="Helical; Name=VIII" evidence="1">
    <location>
        <begin position="533"/>
        <end position="551"/>
    </location>
</feature>
<feature type="transmembrane region" description="Helical; Name=IX" evidence="1">
    <location>
        <begin position="591"/>
        <end position="612"/>
    </location>
</feature>
<feature type="transmembrane region" description="Helical; Name=X" evidence="1">
    <location>
        <begin position="665"/>
        <end position="687"/>
    </location>
</feature>
<feature type="transmembrane region" description="Helical; Name=XI" evidence="1">
    <location>
        <begin position="725"/>
        <end position="745"/>
    </location>
</feature>
<feature type="binding site" evidence="1">
    <location>
        <position position="575"/>
    </location>
    <ligand>
        <name>[4Fe-4S] cluster</name>
        <dbReference type="ChEBI" id="CHEBI:49883"/>
        <note>ligand shared between dimeric partners</note>
    </ligand>
</feature>
<feature type="binding site" evidence="1">
    <location>
        <position position="584"/>
    </location>
    <ligand>
        <name>[4Fe-4S] cluster</name>
        <dbReference type="ChEBI" id="CHEBI:49883"/>
        <note>ligand shared between dimeric partners</note>
    </ligand>
</feature>
<feature type="binding site" description="axial binding residue" evidence="1">
    <location>
        <position position="676"/>
    </location>
    <ligand>
        <name>chlorophyll a'</name>
        <dbReference type="ChEBI" id="CHEBI:189419"/>
        <label>A1</label>
    </ligand>
    <ligandPart>
        <name>Mg</name>
        <dbReference type="ChEBI" id="CHEBI:25107"/>
    </ligandPart>
</feature>
<feature type="binding site" description="axial binding residue" evidence="1">
    <location>
        <position position="684"/>
    </location>
    <ligand>
        <name>chlorophyll a</name>
        <dbReference type="ChEBI" id="CHEBI:58416"/>
        <label>A3</label>
    </ligand>
    <ligandPart>
        <name>Mg</name>
        <dbReference type="ChEBI" id="CHEBI:25107"/>
    </ligandPart>
</feature>
<feature type="binding site" evidence="1">
    <location>
        <position position="692"/>
    </location>
    <ligand>
        <name>chlorophyll a</name>
        <dbReference type="ChEBI" id="CHEBI:58416"/>
        <label>A3</label>
    </ligand>
</feature>
<feature type="binding site" evidence="1">
    <location>
        <position position="693"/>
    </location>
    <ligand>
        <name>phylloquinone</name>
        <dbReference type="ChEBI" id="CHEBI:18067"/>
        <label>A</label>
    </ligand>
</feature>
<feature type="strand" evidence="2">
    <location>
        <begin position="17"/>
        <end position="20"/>
    </location>
</feature>
<feature type="turn" evidence="2">
    <location>
        <begin position="26"/>
        <end position="29"/>
    </location>
</feature>
<feature type="turn" evidence="2">
    <location>
        <begin position="32"/>
        <end position="35"/>
    </location>
</feature>
<feature type="helix" evidence="2">
    <location>
        <begin position="38"/>
        <end position="41"/>
    </location>
</feature>
<feature type="helix" evidence="2">
    <location>
        <begin position="47"/>
        <end position="54"/>
    </location>
</feature>
<feature type="turn" evidence="2">
    <location>
        <begin position="55"/>
        <end position="57"/>
    </location>
</feature>
<feature type="helix" evidence="2">
    <location>
        <begin position="59"/>
        <end position="62"/>
    </location>
</feature>
<feature type="helix" evidence="2">
    <location>
        <begin position="66"/>
        <end position="97"/>
    </location>
</feature>
<feature type="helix" evidence="2">
    <location>
        <begin position="101"/>
        <end position="106"/>
    </location>
</feature>
<feature type="turn" evidence="2">
    <location>
        <begin position="108"/>
        <end position="110"/>
    </location>
</feature>
<feature type="strand" evidence="2">
    <location>
        <begin position="114"/>
        <end position="116"/>
    </location>
</feature>
<feature type="strand" evidence="2">
    <location>
        <begin position="120"/>
        <end position="123"/>
    </location>
</feature>
<feature type="helix" evidence="2">
    <location>
        <begin position="124"/>
        <end position="127"/>
    </location>
</feature>
<feature type="strand" evidence="2">
    <location>
        <begin position="128"/>
        <end position="130"/>
    </location>
</feature>
<feature type="strand" evidence="2">
    <location>
        <begin position="132"/>
        <end position="134"/>
    </location>
</feature>
<feature type="strand" evidence="2">
    <location>
        <begin position="136"/>
        <end position="139"/>
    </location>
</feature>
<feature type="helix" evidence="2">
    <location>
        <begin position="144"/>
        <end position="151"/>
    </location>
</feature>
<feature type="helix" evidence="2">
    <location>
        <begin position="156"/>
        <end position="182"/>
    </location>
</feature>
<feature type="strand" evidence="2">
    <location>
        <begin position="184"/>
        <end position="186"/>
    </location>
</feature>
<feature type="helix" evidence="2">
    <location>
        <begin position="188"/>
        <end position="191"/>
    </location>
</feature>
<feature type="helix" evidence="2">
    <location>
        <begin position="194"/>
        <end position="203"/>
    </location>
</feature>
<feature type="helix" evidence="2">
    <location>
        <begin position="206"/>
        <end position="219"/>
    </location>
</feature>
<feature type="helix" evidence="2">
    <location>
        <begin position="221"/>
        <end position="230"/>
    </location>
</feature>
<feature type="turn" evidence="2">
    <location>
        <begin position="234"/>
        <end position="236"/>
    </location>
</feature>
<feature type="helix" evidence="2">
    <location>
        <begin position="240"/>
        <end position="244"/>
    </location>
</feature>
<feature type="helix" evidence="2">
    <location>
        <begin position="247"/>
        <end position="253"/>
    </location>
</feature>
<feature type="helix" evidence="2">
    <location>
        <begin position="255"/>
        <end position="259"/>
    </location>
</feature>
<feature type="helix" evidence="2">
    <location>
        <begin position="262"/>
        <end position="265"/>
    </location>
</feature>
<feature type="helix" evidence="2">
    <location>
        <begin position="269"/>
        <end position="274"/>
    </location>
</feature>
<feature type="turn" evidence="2">
    <location>
        <begin position="284"/>
        <end position="286"/>
    </location>
</feature>
<feature type="helix" evidence="2">
    <location>
        <begin position="291"/>
        <end position="308"/>
    </location>
</feature>
<feature type="strand" evidence="2">
    <location>
        <begin position="314"/>
        <end position="320"/>
    </location>
</feature>
<feature type="helix" evidence="2">
    <location>
        <begin position="322"/>
        <end position="327"/>
    </location>
</feature>
<feature type="turn" evidence="2">
    <location>
        <begin position="332"/>
        <end position="340"/>
    </location>
</feature>
<feature type="helix" evidence="2">
    <location>
        <begin position="341"/>
        <end position="347"/>
    </location>
</feature>
<feature type="helix" evidence="2">
    <location>
        <begin position="349"/>
        <end position="373"/>
    </location>
</feature>
<feature type="strand" evidence="2">
    <location>
        <begin position="380"/>
        <end position="382"/>
    </location>
</feature>
<feature type="helix" evidence="2">
    <location>
        <begin position="384"/>
        <end position="415"/>
    </location>
</feature>
<feature type="turn" evidence="2">
    <location>
        <begin position="419"/>
        <end position="421"/>
    </location>
</feature>
<feature type="strand" evidence="2">
    <location>
        <begin position="423"/>
        <end position="425"/>
    </location>
</feature>
<feature type="helix" evidence="2">
    <location>
        <begin position="426"/>
        <end position="432"/>
    </location>
</feature>
<feature type="helix" evidence="2">
    <location>
        <begin position="434"/>
        <end position="464"/>
    </location>
</feature>
<feature type="helix" evidence="2">
    <location>
        <begin position="468"/>
        <end position="470"/>
    </location>
</feature>
<feature type="strand" evidence="2">
    <location>
        <begin position="471"/>
        <end position="473"/>
    </location>
</feature>
<feature type="turn" evidence="2">
    <location>
        <begin position="474"/>
        <end position="476"/>
    </location>
</feature>
<feature type="helix" evidence="2">
    <location>
        <begin position="482"/>
        <end position="492"/>
    </location>
</feature>
<feature type="turn" evidence="2">
    <location>
        <begin position="494"/>
        <end position="498"/>
    </location>
</feature>
<feature type="strand" evidence="2">
    <location>
        <begin position="510"/>
        <end position="513"/>
    </location>
</feature>
<feature type="strand" evidence="2">
    <location>
        <begin position="515"/>
        <end position="517"/>
    </location>
</feature>
<feature type="strand" evidence="2">
    <location>
        <begin position="520"/>
        <end position="523"/>
    </location>
</feature>
<feature type="helix" evidence="2">
    <location>
        <begin position="530"/>
        <end position="555"/>
    </location>
</feature>
<feature type="turn" evidence="2">
    <location>
        <begin position="567"/>
        <end position="569"/>
    </location>
</feature>
<feature type="strand" evidence="2">
    <location>
        <begin position="574"/>
        <end position="576"/>
    </location>
</feature>
<feature type="helix" evidence="2">
    <location>
        <begin position="588"/>
        <end position="617"/>
    </location>
</feature>
<feature type="strand" evidence="2">
    <location>
        <begin position="620"/>
        <end position="622"/>
    </location>
</feature>
<feature type="strand" evidence="2">
    <location>
        <begin position="624"/>
        <end position="631"/>
    </location>
</feature>
<feature type="helix" evidence="2">
    <location>
        <begin position="635"/>
        <end position="638"/>
    </location>
</feature>
<feature type="helix" evidence="2">
    <location>
        <begin position="642"/>
        <end position="648"/>
    </location>
</feature>
<feature type="helix" evidence="2">
    <location>
        <begin position="650"/>
        <end position="653"/>
    </location>
</feature>
<feature type="helix" evidence="2">
    <location>
        <begin position="655"/>
        <end position="658"/>
    </location>
</feature>
<feature type="helix" evidence="2">
    <location>
        <begin position="666"/>
        <end position="687"/>
    </location>
</feature>
<feature type="helix" evidence="2">
    <location>
        <begin position="690"/>
        <end position="706"/>
    </location>
</feature>
<feature type="strand" evidence="2">
    <location>
        <begin position="712"/>
        <end position="714"/>
    </location>
</feature>
<feature type="helix" evidence="2">
    <location>
        <begin position="720"/>
        <end position="750"/>
    </location>
</feature>
<gene>
    <name evidence="1" type="primary">psaA</name>
    <name type="ordered locus">OtCpg00510</name>
</gene>
<geneLocation type="chloroplast"/>
<keyword id="KW-0002">3D-structure</keyword>
<keyword id="KW-0004">4Fe-4S</keyword>
<keyword id="KW-0148">Chlorophyll</keyword>
<keyword id="KW-0150">Chloroplast</keyword>
<keyword id="KW-0157">Chromophore</keyword>
<keyword id="KW-0249">Electron transport</keyword>
<keyword id="KW-0408">Iron</keyword>
<keyword id="KW-0411">Iron-sulfur</keyword>
<keyword id="KW-0460">Magnesium</keyword>
<keyword id="KW-0472">Membrane</keyword>
<keyword id="KW-0479">Metal-binding</keyword>
<keyword id="KW-0560">Oxidoreductase</keyword>
<keyword id="KW-0602">Photosynthesis</keyword>
<keyword id="KW-0603">Photosystem I</keyword>
<keyword id="KW-0934">Plastid</keyword>
<keyword id="KW-1185">Reference proteome</keyword>
<keyword id="KW-0793">Thylakoid</keyword>
<keyword id="KW-0812">Transmembrane</keyword>
<keyword id="KW-1133">Transmembrane helix</keyword>
<keyword id="KW-0813">Transport</keyword>
<organism>
    <name type="scientific">Ostreococcus tauri</name>
    <dbReference type="NCBI Taxonomy" id="70448"/>
    <lineage>
        <taxon>Eukaryota</taxon>
        <taxon>Viridiplantae</taxon>
        <taxon>Chlorophyta</taxon>
        <taxon>Mamiellophyceae</taxon>
        <taxon>Mamiellales</taxon>
        <taxon>Bathycoccaceae</taxon>
        <taxon>Ostreococcus</taxon>
    </lineage>
</organism>
<accession>Q0P3K1</accession>
<dbReference type="EC" id="1.97.1.12" evidence="1"/>
<dbReference type="EMBL" id="CR954199">
    <property type="protein sequence ID" value="CAL36376.1"/>
    <property type="molecule type" value="Genomic_DNA"/>
</dbReference>
<dbReference type="RefSeq" id="YP_717254.1">
    <property type="nucleotide sequence ID" value="NC_008289.1"/>
</dbReference>
<dbReference type="PDB" id="7YCA">
    <property type="method" value="EM"/>
    <property type="resolution" value="2.94 A"/>
    <property type="chains" value="A=1-751"/>
</dbReference>
<dbReference type="PDBsum" id="7YCA"/>
<dbReference type="EMDB" id="EMD-33737"/>
<dbReference type="SMR" id="Q0P3K1"/>
<dbReference type="FunCoup" id="Q0P3K1">
    <property type="interactions" value="166"/>
</dbReference>
<dbReference type="STRING" id="70448.Q0P3K1"/>
<dbReference type="GeneID" id="4238840"/>
<dbReference type="KEGG" id="ota:OstapCp51"/>
<dbReference type="eggNOG" id="ENOG502QRYE">
    <property type="taxonomic scope" value="Eukaryota"/>
</dbReference>
<dbReference type="InParanoid" id="Q0P3K1"/>
<dbReference type="Proteomes" id="UP000009170">
    <property type="component" value="Chloroplast"/>
</dbReference>
<dbReference type="GO" id="GO:0009535">
    <property type="term" value="C:chloroplast thylakoid membrane"/>
    <property type="evidence" value="ECO:0007669"/>
    <property type="project" value="UniProtKB-SubCell"/>
</dbReference>
<dbReference type="GO" id="GO:0009522">
    <property type="term" value="C:photosystem I"/>
    <property type="evidence" value="ECO:0007669"/>
    <property type="project" value="UniProtKB-KW"/>
</dbReference>
<dbReference type="GO" id="GO:0051539">
    <property type="term" value="F:4 iron, 4 sulfur cluster binding"/>
    <property type="evidence" value="ECO:0007669"/>
    <property type="project" value="UniProtKB-KW"/>
</dbReference>
<dbReference type="GO" id="GO:0016168">
    <property type="term" value="F:chlorophyll binding"/>
    <property type="evidence" value="ECO:0007669"/>
    <property type="project" value="UniProtKB-KW"/>
</dbReference>
<dbReference type="GO" id="GO:0009055">
    <property type="term" value="F:electron transfer activity"/>
    <property type="evidence" value="ECO:0007669"/>
    <property type="project" value="UniProtKB-UniRule"/>
</dbReference>
<dbReference type="GO" id="GO:0000287">
    <property type="term" value="F:magnesium ion binding"/>
    <property type="evidence" value="ECO:0007669"/>
    <property type="project" value="UniProtKB-UniRule"/>
</dbReference>
<dbReference type="GO" id="GO:0016491">
    <property type="term" value="F:oxidoreductase activity"/>
    <property type="evidence" value="ECO:0007669"/>
    <property type="project" value="UniProtKB-KW"/>
</dbReference>
<dbReference type="GO" id="GO:0015979">
    <property type="term" value="P:photosynthesis"/>
    <property type="evidence" value="ECO:0007669"/>
    <property type="project" value="UniProtKB-UniRule"/>
</dbReference>
<dbReference type="FunFam" id="1.20.1130.10:FF:000001">
    <property type="entry name" value="Photosystem I P700 chlorophyll a apoprotein A2"/>
    <property type="match status" value="1"/>
</dbReference>
<dbReference type="Gene3D" id="1.20.1130.10">
    <property type="entry name" value="Photosystem I PsaA/PsaB"/>
    <property type="match status" value="1"/>
</dbReference>
<dbReference type="HAMAP" id="MF_00458">
    <property type="entry name" value="PSI_PsaA"/>
    <property type="match status" value="1"/>
</dbReference>
<dbReference type="InterPro" id="IPR006243">
    <property type="entry name" value="PSI_PsaA"/>
</dbReference>
<dbReference type="InterPro" id="IPR001280">
    <property type="entry name" value="PSI_PsaA/B"/>
</dbReference>
<dbReference type="InterPro" id="IPR020586">
    <property type="entry name" value="PSI_PsaA/B_CS"/>
</dbReference>
<dbReference type="InterPro" id="IPR036408">
    <property type="entry name" value="PSI_PsaA/B_sf"/>
</dbReference>
<dbReference type="NCBIfam" id="TIGR01335">
    <property type="entry name" value="psaA"/>
    <property type="match status" value="1"/>
</dbReference>
<dbReference type="PANTHER" id="PTHR30128">
    <property type="entry name" value="OUTER MEMBRANE PROTEIN, OMPA-RELATED"/>
    <property type="match status" value="1"/>
</dbReference>
<dbReference type="PANTHER" id="PTHR30128:SF19">
    <property type="entry name" value="PHOTOSYSTEM I P700 CHLOROPHYLL A APOPROTEIN A1-RELATED"/>
    <property type="match status" value="1"/>
</dbReference>
<dbReference type="Pfam" id="PF00223">
    <property type="entry name" value="PsaA_PsaB"/>
    <property type="match status" value="1"/>
</dbReference>
<dbReference type="PIRSF" id="PIRSF002905">
    <property type="entry name" value="PSI_A"/>
    <property type="match status" value="1"/>
</dbReference>
<dbReference type="PRINTS" id="PR00257">
    <property type="entry name" value="PHOTSYSPSAAB"/>
</dbReference>
<dbReference type="SUPFAM" id="SSF81558">
    <property type="entry name" value="Photosystem I subunits PsaA/PsaB"/>
    <property type="match status" value="1"/>
</dbReference>
<dbReference type="PROSITE" id="PS00419">
    <property type="entry name" value="PHOTOSYSTEM_I_PSAAB"/>
    <property type="match status" value="1"/>
</dbReference>
<sequence length="751" mass="83164">MTISPPEREIKTVKIVVDRDPVPTSFEKWAKPGHFSRTLAKGPATTTWVWDLHADAHDFDSHTTDLEDISRKVFSAHFGQLGVIFIWLSGMYFHGARFSNYEAWLSDPTHIKPSAQVVWPIVGQEILNGDVGGGFQGVQITSGFFQLWRGSGITSELQLYSTAIGALICAGLMFFAGWWHYHKAAPKLEWFQNVESMMNHHLAGLLGLGSLAWAGHQIHIALPVNTLLDAGVDPKEIPLPHEFMLNRALMAELYPSFAKGLTPFFTFNWTEYSDFLTFRGGLNPVTGGLWLTDMAHHHLAIAVLFLVAGHQYRTNWGIGHSMKEILEAHKGPFTGEGHKGLYEILTTSWHAQLAINLALMGSLSIIVSHHMYSMPPYPYLATDYGTQLSLFTHHMWIGGFCICGAAAHAAIFMVRDYDPATNYNNVLDRVLRHRDAIISHLNWVCIFLGFHSFGLYIHNDTMSALGRPQDMFSDTAIQLQPIFAQFVQHTHALAPELTAPTAAGSTSASWGGDIVAVGGKIAMMPISLGTSDFMVHHIHAFTIHVTVLILLKGVLFARSSRLIPDKANLGFRFPCDGPGRGGTCQVSAWDHVFLGLFWMYNSISIVIFHFSWKMQSDVWGSVTGNGVSHITGGNFAQSANTINGWLRDFLWAQSSQVIQSYGSALSAYGLIFLGAHFIWAFSLMFLFSGRGYWQELIESIVWAHNKLKVAPAIQPRALSITQGRAVGVAHYLLGGIATTWSFFLARIIAVG</sequence>
<reference key="1">
    <citation type="journal article" date="2007" name="Mol. Biol. Evol.">
        <title>The complete chloroplast and mitochondrial DNA sequence of Ostreococcus tauri: organelle genomes of the smallest eukaryote are examples of compaction.</title>
        <authorList>
            <person name="Robbens S."/>
            <person name="Derelle E."/>
            <person name="Ferraz C."/>
            <person name="Wuyts J."/>
            <person name="Moreau H."/>
            <person name="Van de Peer Y."/>
        </authorList>
    </citation>
    <scope>NUCLEOTIDE SEQUENCE [LARGE SCALE GENOMIC DNA]</scope>
    <source>
        <strain>OTTH0595</strain>
    </source>
</reference>
<evidence type="ECO:0000255" key="1">
    <source>
        <dbReference type="HAMAP-Rule" id="MF_00458"/>
    </source>
</evidence>
<evidence type="ECO:0007829" key="2">
    <source>
        <dbReference type="PDB" id="7YCA"/>
    </source>
</evidence>
<name>PSAA_OSTTA</name>